<proteinExistence type="evidence at protein level"/>
<accession>P16848</accession>
<accession>Q7M6Q2</accession>
<dbReference type="EMBL" id="X17403">
    <property type="protein sequence ID" value="CAA35430.1"/>
    <property type="status" value="ALT_INIT"/>
    <property type="molecule type" value="Genomic_DNA"/>
</dbReference>
<dbReference type="EMBL" id="BK000394">
    <property type="protein sequence ID" value="DAA00136.1"/>
    <property type="molecule type" value="Genomic_DNA"/>
</dbReference>
<dbReference type="PIR" id="S09794">
    <property type="entry name" value="S09794"/>
</dbReference>
<dbReference type="GlyCosmos" id="P16848">
    <property type="glycosylation" value="2 sites, No reported glycans"/>
</dbReference>
<dbReference type="Proteomes" id="UP000008991">
    <property type="component" value="Segment"/>
</dbReference>
<dbReference type="Proteomes" id="UP000008992">
    <property type="component" value="Segment"/>
</dbReference>
<dbReference type="GO" id="GO:0030430">
    <property type="term" value="C:host cell cytoplasm"/>
    <property type="evidence" value="ECO:0000314"/>
    <property type="project" value="UniProtKB"/>
</dbReference>
<dbReference type="GO" id="GO:0042025">
    <property type="term" value="C:host cell nucleus"/>
    <property type="evidence" value="ECO:0000314"/>
    <property type="project" value="UniProtKB"/>
</dbReference>
<dbReference type="GO" id="GO:0052170">
    <property type="term" value="P:symbiont-mediated suppression of host innate immune response"/>
    <property type="evidence" value="ECO:0000314"/>
    <property type="project" value="UniProtKB"/>
</dbReference>
<dbReference type="InterPro" id="IPR007578">
    <property type="entry name" value="Herpes_U10"/>
</dbReference>
<dbReference type="Pfam" id="PF04489">
    <property type="entry name" value="DUF570"/>
    <property type="match status" value="1"/>
</dbReference>
<reference key="1">
    <citation type="journal article" date="1990" name="Curr. Top. Microbiol. Immunol.">
        <title>Analysis of the protein-coding content of the sequence of human cytomegalovirus strain AD169.</title>
        <authorList>
            <person name="Chee M.S."/>
            <person name="Bankier A.T."/>
            <person name="Beck S."/>
            <person name="Bohni R."/>
            <person name="Brown C.M."/>
            <person name="Cerny R."/>
            <person name="Horsnell T."/>
            <person name="Hutchison C.A. III"/>
            <person name="Kouzarides T."/>
            <person name="Martignetti J.A."/>
            <person name="Preddie E."/>
            <person name="Satchwell S.C."/>
            <person name="Tomlinson P."/>
            <person name="Weston K.M."/>
            <person name="Barrell B.G."/>
        </authorList>
    </citation>
    <scope>NUCLEOTIDE SEQUENCE [LARGE SCALE GENOMIC DNA]</scope>
</reference>
<reference key="2">
    <citation type="journal article" date="2003" name="J. Gen. Virol.">
        <title>The human cytomegalovirus genome revisited: comparison with the chimpanzee cytomegalovirus genome.</title>
        <authorList>
            <person name="Davison A.J."/>
            <person name="Dolan A."/>
            <person name="Akter P."/>
            <person name="Addison C."/>
            <person name="Dargan D.J."/>
            <person name="Alcendor D.J."/>
            <person name="McGeoch D.J."/>
            <person name="Hayward G.S."/>
        </authorList>
    </citation>
    <scope>GENOME REANNOTATION</scope>
</reference>
<reference key="3">
    <citation type="journal article" date="2003" name="J. Gen. Virol.">
        <authorList>
            <person name="Davison A.J."/>
            <person name="Dolan A."/>
            <person name="Akter P."/>
            <person name="Addison C."/>
            <person name="Dargan D.J."/>
            <person name="Alcendor D.J."/>
            <person name="McGeoch D.J."/>
            <person name="Hayward G.S."/>
        </authorList>
    </citation>
    <scope>ERRATUM OF PUBMED:12533697</scope>
</reference>
<reference key="4">
    <citation type="journal article" date="2018" name="Cell Host Microbe">
        <title>Human Cytomegalovirus Protein UL31 Inhibits DNA Sensing of cGAS to Mediate Immune Evasion.</title>
        <authorList>
            <person name="Huang Z.F."/>
            <person name="Zou H.M."/>
            <person name="Liao B.W."/>
            <person name="Zhang H.Y."/>
            <person name="Yang Y."/>
            <person name="Fu Y.Z."/>
            <person name="Wang S.Y."/>
            <person name="Luo M.H."/>
            <person name="Wang Y.Y."/>
        </authorList>
    </citation>
    <scope>FUNCTION</scope>
    <scope>INTERACTION WITH HOST CGAS</scope>
    <scope>SUBCELLULAR LOCATION</scope>
</reference>
<organismHost>
    <name type="scientific">Homo sapiens</name>
    <name type="common">Human</name>
    <dbReference type="NCBI Taxonomy" id="9606"/>
</organismHost>
<comment type="function">
    <text evidence="3">Plays a role in the inhibition of host innate immune system by targeting host CGAS and promoting dissociation of DNA from CGAS, thereby inhibiting the enzymatic activity of CGAS.</text>
</comment>
<comment type="subunit">
    <text evidence="3">Interacts with host CGAS.</text>
</comment>
<comment type="subcellular location">
    <subcellularLocation>
        <location evidence="3">Host cytoplasm</location>
    </subcellularLocation>
    <subcellularLocation>
        <location evidence="3">Host nucleus</location>
    </subcellularLocation>
</comment>
<comment type="similarity">
    <text evidence="5">Belongs to the herpesviridae U10 family.</text>
</comment>
<comment type="sequence caution" evidence="5">
    <conflict type="erroneous initiation">
        <sequence resource="EMBL-CDS" id="CAA35430"/>
    </conflict>
</comment>
<keyword id="KW-0325">Glycoprotein</keyword>
<keyword id="KW-1035">Host cytoplasm</keyword>
<keyword id="KW-1048">Host nucleus</keyword>
<keyword id="KW-0945">Host-virus interaction</keyword>
<keyword id="KW-1090">Inhibition of host innate immune response by virus</keyword>
<keyword id="KW-1185">Reference proteome</keyword>
<keyword id="KW-0732">Signal</keyword>
<keyword id="KW-0899">Viral immunoevasion</keyword>
<sequence length="595" mass="65748">MGDKPTLVTLLTVAVSSPPPSSPLPLVSFTELLLPPPSVAAAAVAATATSEVGEKTAEQEVAAADPETGNERRENRENEGGETRTTGTTAVKRSHDGIPRQLAERLRLCRHMDPEQDYRLPAQDVVTSWIEALRDADRDNYGRCVRHAKIHRSASHLTAYESYLVSITEQYNTASNVTEKASYVQGCIFLSFPVIYNNTQGCGYKYDWSNVVTPKAAYAELFFLLCSTSESSVVLQPLITKGGLCSSMAVYDEETMRQSQAVQIGFLHTQLVMVPFVPHACPHYAVPFTTPGKPGCGGAPSGVAGLEEAAPFGRVSVTRHGATLLCRVDHLTWISKRVTTYGHKKITRYLAQFRGTMDDDEAALPGEDEAWIASKNVQYEFMGLIFTVNVDSLCVDAEQRQLLGTVATSFCHRVSDKITARNMPRAFSFYLLTSAQRGYDLRFSRNPSLFFSGDALNCPLLNEPNVFSLTVHAPYDIHFGVQPRQTVELDLRYVQITDRCFLVANLPHEDAFYTGLSVWRGGEPLKVTLWTRTRSIVIPQGTPIATLYQITEGDGNVYSYNHHTVFRQMHAAGTTTFFLGDMQLPADNFLTSPHP</sequence>
<gene>
    <name evidence="4" type="primary">UL31</name>
</gene>
<feature type="signal peptide" evidence="1">
    <location>
        <begin position="1"/>
        <end position="23"/>
    </location>
</feature>
<feature type="chain" id="PRO_0000038314" description="Protein UL31">
    <location>
        <begin position="24"/>
        <end position="595"/>
    </location>
</feature>
<feature type="region of interest" description="Disordered" evidence="2">
    <location>
        <begin position="47"/>
        <end position="94"/>
    </location>
</feature>
<feature type="compositionally biased region" description="Basic and acidic residues" evidence="2">
    <location>
        <begin position="69"/>
        <end position="82"/>
    </location>
</feature>
<feature type="glycosylation site" description="N-linked (GlcNAc...) asparagine; by host" evidence="1">
    <location>
        <position position="176"/>
    </location>
</feature>
<feature type="glycosylation site" description="N-linked (GlcNAc...) asparagine; by host" evidence="1">
    <location>
        <position position="197"/>
    </location>
</feature>
<evidence type="ECO:0000255" key="1"/>
<evidence type="ECO:0000256" key="2">
    <source>
        <dbReference type="SAM" id="MobiDB-lite"/>
    </source>
</evidence>
<evidence type="ECO:0000269" key="3">
    <source>
    </source>
</evidence>
<evidence type="ECO:0000303" key="4">
    <source>
    </source>
</evidence>
<evidence type="ECO:0000305" key="5"/>
<name>UL31_HCMVA</name>
<protein>
    <recommendedName>
        <fullName evidence="5">Protein UL31</fullName>
    </recommendedName>
</protein>
<organism>
    <name type="scientific">Human cytomegalovirus (strain AD169)</name>
    <name type="common">HHV-5</name>
    <name type="synonym">Human herpesvirus 5</name>
    <dbReference type="NCBI Taxonomy" id="10360"/>
    <lineage>
        <taxon>Viruses</taxon>
        <taxon>Duplodnaviria</taxon>
        <taxon>Heunggongvirae</taxon>
        <taxon>Peploviricota</taxon>
        <taxon>Herviviricetes</taxon>
        <taxon>Herpesvirales</taxon>
        <taxon>Orthoherpesviridae</taxon>
        <taxon>Betaherpesvirinae</taxon>
        <taxon>Cytomegalovirus</taxon>
        <taxon>Cytomegalovirus humanbeta5</taxon>
        <taxon>Human cytomegalovirus</taxon>
    </lineage>
</organism>